<gene>
    <name evidence="2" type="primary">HSPA8</name>
    <name evidence="8" type="synonym">HSC70</name>
</gene>
<evidence type="ECO:0000250" key="1"/>
<evidence type="ECO:0000250" key="2">
    <source>
        <dbReference type="UniProtKB" id="P11142"/>
    </source>
</evidence>
<evidence type="ECO:0000250" key="3">
    <source>
        <dbReference type="UniProtKB" id="P63017"/>
    </source>
</evidence>
<evidence type="ECO:0000250" key="4">
    <source>
        <dbReference type="UniProtKB" id="P63018"/>
    </source>
</evidence>
<evidence type="ECO:0000256" key="5">
    <source>
        <dbReference type="SAM" id="MobiDB-lite"/>
    </source>
</evidence>
<evidence type="ECO:0000269" key="6">
    <source>
    </source>
</evidence>
<evidence type="ECO:0000269" key="7">
    <source>
    </source>
</evidence>
<evidence type="ECO:0000303" key="8">
    <source>
    </source>
</evidence>
<evidence type="ECO:0000305" key="9"/>
<evidence type="ECO:0007744" key="10">
    <source>
        <dbReference type="PDB" id="2QW9"/>
    </source>
</evidence>
<evidence type="ECO:0007744" key="11">
    <source>
        <dbReference type="PDB" id="2QWL"/>
    </source>
</evidence>
<evidence type="ECO:0007744" key="12">
    <source>
        <dbReference type="PDB" id="2QWM"/>
    </source>
</evidence>
<evidence type="ECO:0007744" key="13">
    <source>
        <dbReference type="PDB" id="2QWN"/>
    </source>
</evidence>
<evidence type="ECO:0007744" key="14">
    <source>
        <dbReference type="PDB" id="2QWO"/>
    </source>
</evidence>
<evidence type="ECO:0007744" key="15">
    <source>
        <dbReference type="PDB" id="2QWP"/>
    </source>
</evidence>
<evidence type="ECO:0007744" key="16">
    <source>
        <dbReference type="PDB" id="2QWQ"/>
    </source>
</evidence>
<evidence type="ECO:0007744" key="17">
    <source>
        <dbReference type="PDB" id="2QWR"/>
    </source>
</evidence>
<evidence type="ECO:0007829" key="18">
    <source>
        <dbReference type="PDB" id="1HX1"/>
    </source>
</evidence>
<evidence type="ECO:0007829" key="19">
    <source>
        <dbReference type="PDB" id="2QWO"/>
    </source>
</evidence>
<evidence type="ECO:0007829" key="20">
    <source>
        <dbReference type="PDB" id="3C7N"/>
    </source>
</evidence>
<evidence type="ECO:0007829" key="21">
    <source>
        <dbReference type="PDB" id="4FL9"/>
    </source>
</evidence>
<evidence type="ECO:0007829" key="22">
    <source>
        <dbReference type="PDB" id="7ODB"/>
    </source>
</evidence>
<evidence type="ECO:0007829" key="23">
    <source>
        <dbReference type="PDB" id="7ODD"/>
    </source>
</evidence>
<comment type="function">
    <text evidence="2 6 7">Molecular chaperone implicated in a wide variety of cellular processes, including protection of the proteome from stress, folding and transport of newly synthesized polypeptides, chaperone-mediated autophagy, activation of proteolysis of misfolded proteins, formation and dissociation of protein complexes, and antigen presentation. Plays a pivotal role in the protein quality control system, ensuring the correct folding of proteins, the re-folding of misfolded proteins and controlling the targeting of proteins for subsequent degradation. This is achieved through cycles of ATP binding, ATP hydrolysis and ADP release, mediated by co-chaperones. The co-chaperones have been shown to not only regulate different steps of the ATPase cycle of HSP70, but they also have an individual specificity such that one co-chaperone may promote folding of a substrate while another may promote degradation. The affinity of HSP70 for polypeptides is regulated by its nucleotide bound state. In the ATP-bound form, it has a low affinity for substrate proteins. However, upon hydrolysis of the ATP to ADP, it undergoes a conformational change that increases its affinity for substrate proteins. HSP70 goes through repeated cycles of ATP hydrolysis and nucleotide exchange, which permits cycles of substrate binding and release. The HSP70-associated co-chaperones are of three types: J-domain co-chaperones HSP40s (stimulate ATPase hydrolysis by HSP70), the nucleotide exchange factors (NEF) such as BAG1/2/3 (facilitate conversion of HSP70 from the ADP-bound to the ATP-bound state thereby promoting substrate release), and the TPR domain chaperones such as HOPX and STUB1. Plays a critical role in mitochondrial import, delivers preproteins to the mitochondrial import receptor TOMM70. Acts as a repressor of transcriptional activation. Inhibits the transcriptional coactivator activity of CITED1 on Smad-mediated transcription. Component of the PRP19-CDC5L complex that forms an integral part of the spliceosome and is required for activating pre-mRNA splicing. May have a scaffolding role in the spliceosome assembly as it contacts all other components of the core complex. Binds bacterial lipopolysaccharide (LPS) and mediates LPS-induced inflammatory response, including TNF secretion by monocytes. Substrate recognition component in chaperone-mediated autophagy (CMA), a selective protein degradation process that mediates degradation of proteins with a -KFERQ motif: HSPA8/HSC70 specifically recognizes and binds cytosolic proteins bearing a -KFERQ motif and promotes their recruitment to the surface of the lysosome where they bind to lysosomal protein LAMP2. KFERQ motif-containing proteins are eventually transported into the lysosomal lumen where they are degraded. In conjunction with LAMP2, facilitates MHC class II presentation of cytoplasmic antigens by guiding antigens to the lysosomal membrane for interaction with LAMP2 which then elicits MHC class II presentation of peptides to the cell membrane. Participates in the ER-associated degradation (ERAD) quality control pathway in conjunction with J domain-containing co-chaperones and the E3 ligase STUB1. It is recruited to clathrin-coated vesicles through its interaction with DNAJC6 leading to activation of HSPA8/HSC70 ATPase activity and therefore uncoating of clathrin-coated vesicles (PubMed:17996706, PubMed:8524399).</text>
</comment>
<comment type="catalytic activity">
    <reaction evidence="2">
        <text>ATP + H2O = ADP + phosphate + H(+)</text>
        <dbReference type="Rhea" id="RHEA:13065"/>
        <dbReference type="ChEBI" id="CHEBI:15377"/>
        <dbReference type="ChEBI" id="CHEBI:15378"/>
        <dbReference type="ChEBI" id="CHEBI:30616"/>
        <dbReference type="ChEBI" id="CHEBI:43474"/>
        <dbReference type="ChEBI" id="CHEBI:456216"/>
        <dbReference type="EC" id="3.6.4.10"/>
    </reaction>
</comment>
<comment type="subunit">
    <text evidence="2 3 4 6 7">Component of the chaperone-assisted selective autophagy (CASA) complex consisting of BAG3, HSPA8/HSC70, HSPB8 and STUB1/CHIP (By similarity). Identified in a IGF2BP1-dependent mRNP granule complex containing untranslated mRNAs (By similarity). Interacts with PACRG (By similarity). Interacts with HSPH1/HSP105 (By similarity). Interacts with IRAK1BP1 and BAG1 (By similarity). Interacts with DNAJC7 (By similarity). Interacts with DNAJB12 (via J domain) (By similarity). Interacts with DNAJB14 (via J domain) (By similarity). Interacts (via C-terminus) with the E3 ligase STUB1 forming a 210 kDa complex of one STUB1 and two HSPA8 molecules (By similarity). Interacts with CITED1 (via N-terminus); the interaction suppresses the association of CITED1 to p300/CBP and Smad-mediated transcription transactivation (By similarity). Component of the PRP19-CDC5L splicing complex composed of a core complex comprising a homotetramer of PRPF19, CDC5L, PLRG1 and BCAS2, and at least three less stably associated proteins CTNNBL1, CWC15 and HSPA8 (By similarity). Interacts with TRIM5 (By similarity). Part of a complex composed at least of ASH2L, EMSY, HCFC1, HSPA8, CCAR2, MATR3, MKI67, RBBP5, TUBB2A, WDR5 and ZNF335; this complex may have a histone H3-specific methyltransferase activity (By similarity). Interacts with METTL21A (By similarity). Following LPS binding, may form a complex with CXCR4, GDF5 and HSP90AA1 (By similarity). Interacts with PRKN (By similarity). Interacts with FOXP3 (By similarity). Interacts with DNAJC9 (via J domain) (By similarity). Interacts with MLLT11 (By similarity). Interacts with RNF207 (By similarity). Interacts with DNAJC21 (By similarity). Interacts with DNAJB2 (By similarity). Interacts with TTC1 (via TPR repeats) (By similarity). Interacts with SGTA (via TPR repeats) (By similarity). Interacts with HSF1 (via transactivation domain) (By similarity). Interacts with HOPX, STUB1, HSP40, HSP901, BAG2 and BAG3 (By similarity). Interacts with HSPC138 (By similarity). Interacts with ZMYND10 (By similarity). Interacts with VGF-derived peptide TLQP-21 (By similarity). Interacts with BCL2L1, GIMAP5 and MCL1; the interaction with BCL2L1 or MCL1 is impaired in the absence of GIMAP5 (By similarity). Interacts with NLPR12 (By similarity). Interacts with TTC4 (By similarity). Interacts with TOMM70; the interaction is required for preprotein mitochondrial import (By similarity). May interact with DNJC9; the interaction seems to be histone-dependent (By similarity). Interacts with BAG5 and JPH2; the interaction with JPH2 is increased in the presence of BAG5 (By similarity). Interacts with DNAJC6 (via J domain) in an ATP-dependent manner; this interaction stimulates the HSPA8's ATPase activity (PubMed:17996706). Forms a complex composed of HSPA8, CLTC and DNAJC6 (PubMed:8524399). Interacts with HSPA8; this interaction modulates migratory and antigen-presenting capacities of dendritic cells (By similarity).</text>
</comment>
<comment type="interaction">
    <interactant intactId="EBI-907802">
        <id>P19120</id>
    </interactant>
    <interactant intactId="EBI-349854">
        <id>P13569</id>
        <label>CFTR</label>
    </interactant>
    <organismsDiffer>true</organismsDiffer>
    <experiments>2</experiments>
</comment>
<comment type="interaction">
    <interactant intactId="EBI-907802">
        <id>P19120</id>
    </interactant>
    <interactant intactId="EBI-6115317">
        <id>P26361</id>
        <label>Cftr</label>
    </interactant>
    <organismsDiffer>true</organismsDiffer>
    <experiments>5</experiments>
</comment>
<comment type="subcellular location">
    <subcellularLocation>
        <location evidence="2">Cytoplasm</location>
    </subcellularLocation>
    <subcellularLocation>
        <location evidence="2">Melanosome</location>
    </subcellularLocation>
    <subcellularLocation>
        <location evidence="2">Nucleus</location>
        <location evidence="2">Nucleolus</location>
    </subcellularLocation>
    <subcellularLocation>
        <location evidence="2">Cell membrane</location>
    </subcellularLocation>
    <subcellularLocation>
        <location evidence="2">Lysosome membrane</location>
        <topology evidence="2">Peripheral membrane protein</topology>
        <orientation evidence="2">Cytoplasmic side</orientation>
    </subcellularLocation>
    <text evidence="2">Localized in cytoplasmic mRNP granules containing untranslated mRNAs. Translocates rapidly from the cytoplasm to the nuclei, and especially to the nucleoli, upon heat shock.</text>
</comment>
<comment type="tissue specificity">
    <text>Ubiquitous.</text>
</comment>
<comment type="induction">
    <text>Constitutively synthesized.</text>
</comment>
<comment type="domain">
    <text evidence="2">The N-terminal nucleotide binding domain (NBD) (also known as the ATPase domain) is responsible for binding and hydrolyzing ATP. The C-terminal substrate-binding domain (SBD) (also known as peptide-binding domain) binds to the client/substrate proteins. The two domains are allosterically coupled so that, when ATP is bound to the NBD, the SBD binds relatively weakly to clients. When ADP is bound in the NBD, a conformational change enhances the affinity of the SBD for client proteins.</text>
</comment>
<comment type="PTM">
    <text evidence="2">Acetylated.</text>
</comment>
<comment type="PTM">
    <text evidence="2">ISGylated.</text>
</comment>
<comment type="PTM">
    <text evidence="2">Trimethylation at Lys-561 reduces fibrillar SNCA binding.</text>
</comment>
<comment type="similarity">
    <text evidence="9">Belongs to the heat shock protein 70 family.</text>
</comment>
<organism>
    <name type="scientific">Bos taurus</name>
    <name type="common">Bovine</name>
    <dbReference type="NCBI Taxonomy" id="9913"/>
    <lineage>
        <taxon>Eukaryota</taxon>
        <taxon>Metazoa</taxon>
        <taxon>Chordata</taxon>
        <taxon>Craniata</taxon>
        <taxon>Vertebrata</taxon>
        <taxon>Euteleostomi</taxon>
        <taxon>Mammalia</taxon>
        <taxon>Eutheria</taxon>
        <taxon>Laurasiatheria</taxon>
        <taxon>Artiodactyla</taxon>
        <taxon>Ruminantia</taxon>
        <taxon>Pecora</taxon>
        <taxon>Bovidae</taxon>
        <taxon>Bovinae</taxon>
        <taxon>Bos</taxon>
    </lineage>
</organism>
<protein>
    <recommendedName>
        <fullName evidence="2">Heat shock cognate 71 kDa protein</fullName>
        <ecNumber evidence="2">3.6.4.10</ecNumber>
    </recommendedName>
    <alternativeName>
        <fullName>Heat shock 70 kDa protein 8</fullName>
    </alternativeName>
</protein>
<dbReference type="EC" id="3.6.4.10" evidence="2"/>
<dbReference type="EMBL" id="X53827">
    <property type="protein sequence ID" value="CAA37823.1"/>
    <property type="molecule type" value="mRNA"/>
</dbReference>
<dbReference type="EMBL" id="X53335">
    <property type="protein sequence ID" value="CAA37422.1"/>
    <property type="molecule type" value="mRNA"/>
</dbReference>
<dbReference type="EMBL" id="BT030487">
    <property type="protein sequence ID" value="ABQ12927.1"/>
    <property type="molecule type" value="mRNA"/>
</dbReference>
<dbReference type="EMBL" id="BC105182">
    <property type="protein sequence ID" value="AAI05183.1"/>
    <property type="molecule type" value="mRNA"/>
</dbReference>
<dbReference type="PIR" id="S11456">
    <property type="entry name" value="S11456"/>
</dbReference>
<dbReference type="RefSeq" id="NP_776770.2">
    <property type="nucleotide sequence ID" value="NM_174345.4"/>
</dbReference>
<dbReference type="PDB" id="1ATR">
    <property type="method" value="X-ray"/>
    <property type="resolution" value="2.34 A"/>
    <property type="chains" value="A=1-386"/>
</dbReference>
<dbReference type="PDB" id="1ATS">
    <property type="method" value="X-ray"/>
    <property type="resolution" value="2.43 A"/>
    <property type="chains" value="A=1-386"/>
</dbReference>
<dbReference type="PDB" id="1BA0">
    <property type="method" value="X-ray"/>
    <property type="resolution" value="1.90 A"/>
    <property type="chains" value="A=1-386"/>
</dbReference>
<dbReference type="PDB" id="1BA1">
    <property type="method" value="X-ray"/>
    <property type="resolution" value="1.70 A"/>
    <property type="chains" value="A=1-386"/>
</dbReference>
<dbReference type="PDB" id="1BUP">
    <property type="method" value="X-ray"/>
    <property type="resolution" value="1.70 A"/>
    <property type="chains" value="A=1-386"/>
</dbReference>
<dbReference type="PDB" id="1HPM">
    <property type="method" value="X-ray"/>
    <property type="resolution" value="1.70 A"/>
    <property type="chains" value="A=1-386"/>
</dbReference>
<dbReference type="PDB" id="1HX1">
    <property type="method" value="X-ray"/>
    <property type="resolution" value="1.90 A"/>
    <property type="chains" value="A=4-381"/>
</dbReference>
<dbReference type="PDB" id="1KAX">
    <property type="method" value="X-ray"/>
    <property type="resolution" value="1.70 A"/>
    <property type="chains" value="A=1-381"/>
</dbReference>
<dbReference type="PDB" id="1KAY">
    <property type="method" value="X-ray"/>
    <property type="resolution" value="1.70 A"/>
    <property type="chains" value="A=1-381"/>
</dbReference>
<dbReference type="PDB" id="1KAZ">
    <property type="method" value="X-ray"/>
    <property type="resolution" value="1.70 A"/>
    <property type="chains" value="A=1-381"/>
</dbReference>
<dbReference type="PDB" id="1NGA">
    <property type="method" value="X-ray"/>
    <property type="resolution" value="2.18 A"/>
    <property type="chains" value="A=1-386"/>
</dbReference>
<dbReference type="PDB" id="1NGB">
    <property type="method" value="X-ray"/>
    <property type="resolution" value="2.18 A"/>
    <property type="chains" value="A=1-386"/>
</dbReference>
<dbReference type="PDB" id="1NGC">
    <property type="method" value="X-ray"/>
    <property type="resolution" value="2.20 A"/>
    <property type="chains" value="A=1-386"/>
</dbReference>
<dbReference type="PDB" id="1NGD">
    <property type="method" value="X-ray"/>
    <property type="resolution" value="2.18 A"/>
    <property type="chains" value="A=1-386"/>
</dbReference>
<dbReference type="PDB" id="1NGE">
    <property type="method" value="X-ray"/>
    <property type="resolution" value="2.05 A"/>
    <property type="chains" value="A=1-386"/>
</dbReference>
<dbReference type="PDB" id="1NGF">
    <property type="method" value="X-ray"/>
    <property type="resolution" value="2.17 A"/>
    <property type="chains" value="A=1-386"/>
</dbReference>
<dbReference type="PDB" id="1NGG">
    <property type="method" value="X-ray"/>
    <property type="resolution" value="2.19 A"/>
    <property type="chains" value="A=1-386"/>
</dbReference>
<dbReference type="PDB" id="1NGH">
    <property type="method" value="X-ray"/>
    <property type="resolution" value="2.23 A"/>
    <property type="chains" value="A=1-386"/>
</dbReference>
<dbReference type="PDB" id="1NGI">
    <property type="method" value="X-ray"/>
    <property type="resolution" value="2.15 A"/>
    <property type="chains" value="A=1-386"/>
</dbReference>
<dbReference type="PDB" id="1NGJ">
    <property type="method" value="X-ray"/>
    <property type="resolution" value="2.10 A"/>
    <property type="chains" value="A=1-386"/>
</dbReference>
<dbReference type="PDB" id="1QQM">
    <property type="method" value="X-ray"/>
    <property type="resolution" value="1.90 A"/>
    <property type="chains" value="A=4-381"/>
</dbReference>
<dbReference type="PDB" id="1QQN">
    <property type="method" value="X-ray"/>
    <property type="resolution" value="1.90 A"/>
    <property type="chains" value="A=4-381"/>
</dbReference>
<dbReference type="PDB" id="1QQO">
    <property type="method" value="X-ray"/>
    <property type="resolution" value="1.90 A"/>
    <property type="chains" value="A=4-381"/>
</dbReference>
<dbReference type="PDB" id="1YUW">
    <property type="method" value="X-ray"/>
    <property type="resolution" value="2.60 A"/>
    <property type="chains" value="A=1-554"/>
</dbReference>
<dbReference type="PDB" id="2BUP">
    <property type="method" value="X-ray"/>
    <property type="resolution" value="1.70 A"/>
    <property type="chains" value="A=1-381"/>
</dbReference>
<dbReference type="PDB" id="2QW9">
    <property type="method" value="X-ray"/>
    <property type="resolution" value="1.85 A"/>
    <property type="chains" value="A/B=1-394"/>
</dbReference>
<dbReference type="PDB" id="2QWL">
    <property type="method" value="X-ray"/>
    <property type="resolution" value="1.75 A"/>
    <property type="chains" value="A/B=1-394"/>
</dbReference>
<dbReference type="PDB" id="2QWM">
    <property type="method" value="X-ray"/>
    <property type="resolution" value="1.86 A"/>
    <property type="chains" value="A/B=1-394"/>
</dbReference>
<dbReference type="PDB" id="2QWN">
    <property type="method" value="X-ray"/>
    <property type="resolution" value="2.40 A"/>
    <property type="chains" value="A=1-394"/>
</dbReference>
<dbReference type="PDB" id="2QWO">
    <property type="method" value="X-ray"/>
    <property type="resolution" value="1.70 A"/>
    <property type="chains" value="A=1-394"/>
</dbReference>
<dbReference type="PDB" id="2QWP">
    <property type="method" value="X-ray"/>
    <property type="resolution" value="1.75 A"/>
    <property type="chains" value="A=1-394"/>
</dbReference>
<dbReference type="PDB" id="2QWQ">
    <property type="method" value="X-ray"/>
    <property type="resolution" value="2.21 A"/>
    <property type="chains" value="A=1-394"/>
</dbReference>
<dbReference type="PDB" id="2QWR">
    <property type="method" value="X-ray"/>
    <property type="resolution" value="2.21 A"/>
    <property type="chains" value="A=1-394"/>
</dbReference>
<dbReference type="PDB" id="3C7N">
    <property type="method" value="X-ray"/>
    <property type="resolution" value="3.12 A"/>
    <property type="chains" value="B=1-554"/>
</dbReference>
<dbReference type="PDB" id="3HSC">
    <property type="method" value="X-ray"/>
    <property type="resolution" value="1.93 A"/>
    <property type="chains" value="A=1-386"/>
</dbReference>
<dbReference type="PDB" id="4FL9">
    <property type="method" value="X-ray"/>
    <property type="resolution" value="1.90 A"/>
    <property type="chains" value="A=1-554"/>
</dbReference>
<dbReference type="PDB" id="6H54">
    <property type="method" value="X-ray"/>
    <property type="resolution" value="2.02 A"/>
    <property type="chains" value="A=1-554"/>
</dbReference>
<dbReference type="PDB" id="7O6R">
    <property type="method" value="X-ray"/>
    <property type="resolution" value="2.00 A"/>
    <property type="chains" value="A=1-554"/>
</dbReference>
<dbReference type="PDB" id="7ODB">
    <property type="method" value="X-ray"/>
    <property type="resolution" value="1.66 A"/>
    <property type="chains" value="A=1-554"/>
</dbReference>
<dbReference type="PDB" id="7ODD">
    <property type="method" value="X-ray"/>
    <property type="resolution" value="1.98 A"/>
    <property type="chains" value="A=1-554"/>
</dbReference>
<dbReference type="PDB" id="7ODI">
    <property type="method" value="X-ray"/>
    <property type="resolution" value="1.83 A"/>
    <property type="chains" value="A=1-554"/>
</dbReference>
<dbReference type="PDB" id="7PLK">
    <property type="method" value="X-ray"/>
    <property type="resolution" value="2.49 A"/>
    <property type="chains" value="A=1-554"/>
</dbReference>
<dbReference type="PDBsum" id="1ATR"/>
<dbReference type="PDBsum" id="1ATS"/>
<dbReference type="PDBsum" id="1BA0"/>
<dbReference type="PDBsum" id="1BA1"/>
<dbReference type="PDBsum" id="1BUP"/>
<dbReference type="PDBsum" id="1HPM"/>
<dbReference type="PDBsum" id="1HX1"/>
<dbReference type="PDBsum" id="1KAX"/>
<dbReference type="PDBsum" id="1KAY"/>
<dbReference type="PDBsum" id="1KAZ"/>
<dbReference type="PDBsum" id="1NGA"/>
<dbReference type="PDBsum" id="1NGB"/>
<dbReference type="PDBsum" id="1NGC"/>
<dbReference type="PDBsum" id="1NGD"/>
<dbReference type="PDBsum" id="1NGE"/>
<dbReference type="PDBsum" id="1NGF"/>
<dbReference type="PDBsum" id="1NGG"/>
<dbReference type="PDBsum" id="1NGH"/>
<dbReference type="PDBsum" id="1NGI"/>
<dbReference type="PDBsum" id="1NGJ"/>
<dbReference type="PDBsum" id="1QQM"/>
<dbReference type="PDBsum" id="1QQN"/>
<dbReference type="PDBsum" id="1QQO"/>
<dbReference type="PDBsum" id="1YUW"/>
<dbReference type="PDBsum" id="2BUP"/>
<dbReference type="PDBsum" id="2QW9"/>
<dbReference type="PDBsum" id="2QWL"/>
<dbReference type="PDBsum" id="2QWM"/>
<dbReference type="PDBsum" id="2QWN"/>
<dbReference type="PDBsum" id="2QWO"/>
<dbReference type="PDBsum" id="2QWP"/>
<dbReference type="PDBsum" id="2QWQ"/>
<dbReference type="PDBsum" id="2QWR"/>
<dbReference type="PDBsum" id="3C7N"/>
<dbReference type="PDBsum" id="3HSC"/>
<dbReference type="PDBsum" id="4FL9"/>
<dbReference type="PDBsum" id="6H54"/>
<dbReference type="PDBsum" id="7O6R"/>
<dbReference type="PDBsum" id="7ODB"/>
<dbReference type="PDBsum" id="7ODD"/>
<dbReference type="PDBsum" id="7ODI"/>
<dbReference type="PDBsum" id="7PLK"/>
<dbReference type="BMRB" id="P19120"/>
<dbReference type="EMDB" id="EMD-4035"/>
<dbReference type="EMDB" id="EMD-4036"/>
<dbReference type="SMR" id="P19120"/>
<dbReference type="BioGRID" id="159144">
    <property type="interactions" value="2"/>
</dbReference>
<dbReference type="DIP" id="DIP-35481N"/>
<dbReference type="FunCoup" id="P19120">
    <property type="interactions" value="2460"/>
</dbReference>
<dbReference type="IntAct" id="P19120">
    <property type="interactions" value="8"/>
</dbReference>
<dbReference type="MINT" id="P19120"/>
<dbReference type="STRING" id="9913.ENSBTAP00000058201"/>
<dbReference type="BindingDB" id="P19120"/>
<dbReference type="ChEMBL" id="CHEMBL1275213"/>
<dbReference type="PaxDb" id="9913-ENSBTAP00000017497"/>
<dbReference type="PeptideAtlas" id="P19120"/>
<dbReference type="GeneID" id="281831"/>
<dbReference type="KEGG" id="bta:281831"/>
<dbReference type="CTD" id="3312"/>
<dbReference type="VEuPathDB" id="HostDB:ENSBTAG00000013162"/>
<dbReference type="eggNOG" id="KOG0101">
    <property type="taxonomic scope" value="Eukaryota"/>
</dbReference>
<dbReference type="HOGENOM" id="CLU_005965_3_0_1"/>
<dbReference type="InParanoid" id="P19120"/>
<dbReference type="OrthoDB" id="2401965at2759"/>
<dbReference type="TreeFam" id="TF105042"/>
<dbReference type="Reactome" id="R-BTA-3371453">
    <property type="pathway name" value="Regulation of HSF1-mediated heat shock response"/>
</dbReference>
<dbReference type="Reactome" id="R-BTA-3371497">
    <property type="pathway name" value="HSP90 chaperone cycle for steroid hormone receptors (SHR) in the presence of ligand"/>
</dbReference>
<dbReference type="Reactome" id="R-BTA-3371568">
    <property type="pathway name" value="Attenuation phase"/>
</dbReference>
<dbReference type="Reactome" id="R-BTA-3371571">
    <property type="pathway name" value="HSF1-dependent transactivation"/>
</dbReference>
<dbReference type="Reactome" id="R-BTA-450408">
    <property type="pathway name" value="AUF1 (hnRNP D0) binds and destabilizes mRNA"/>
</dbReference>
<dbReference type="Reactome" id="R-BTA-6798695">
    <property type="pathway name" value="Neutrophil degranulation"/>
</dbReference>
<dbReference type="Reactome" id="R-BTA-72163">
    <property type="pathway name" value="mRNA Splicing - Major Pathway"/>
</dbReference>
<dbReference type="Reactome" id="R-BTA-8856828">
    <property type="pathway name" value="Clathrin-mediated endocytosis"/>
</dbReference>
<dbReference type="Reactome" id="R-BTA-8876725">
    <property type="pathway name" value="Protein methylation"/>
</dbReference>
<dbReference type="Reactome" id="R-BTA-888590">
    <property type="pathway name" value="GABA synthesis, release, reuptake and degradation"/>
</dbReference>
<dbReference type="Reactome" id="R-BTA-9833482">
    <property type="pathway name" value="PKR-mediated signaling"/>
</dbReference>
<dbReference type="EvolutionaryTrace" id="P19120"/>
<dbReference type="PRO" id="PR:P19120"/>
<dbReference type="Proteomes" id="UP000009136">
    <property type="component" value="Chromosome 15"/>
</dbReference>
<dbReference type="Bgee" id="ENSBTAG00000013162">
    <property type="expression patterns" value="Expressed in prefrontal cortex and 100 other cell types or tissues"/>
</dbReference>
<dbReference type="GO" id="GO:0005737">
    <property type="term" value="C:cytoplasm"/>
    <property type="evidence" value="ECO:0000318"/>
    <property type="project" value="GO_Central"/>
</dbReference>
<dbReference type="GO" id="GO:0005829">
    <property type="term" value="C:cytosol"/>
    <property type="evidence" value="ECO:0000318"/>
    <property type="project" value="GO_Central"/>
</dbReference>
<dbReference type="GO" id="GO:0005765">
    <property type="term" value="C:lysosomal membrane"/>
    <property type="evidence" value="ECO:0000250"/>
    <property type="project" value="UniProtKB"/>
</dbReference>
<dbReference type="GO" id="GO:0042470">
    <property type="term" value="C:melanosome"/>
    <property type="evidence" value="ECO:0007669"/>
    <property type="project" value="UniProtKB-SubCell"/>
</dbReference>
<dbReference type="GO" id="GO:0005730">
    <property type="term" value="C:nucleolus"/>
    <property type="evidence" value="ECO:0007669"/>
    <property type="project" value="UniProtKB-SubCell"/>
</dbReference>
<dbReference type="GO" id="GO:0005634">
    <property type="term" value="C:nucleus"/>
    <property type="evidence" value="ECO:0000250"/>
    <property type="project" value="UniProtKB"/>
</dbReference>
<dbReference type="GO" id="GO:0005886">
    <property type="term" value="C:plasma membrane"/>
    <property type="evidence" value="ECO:0000318"/>
    <property type="project" value="GO_Central"/>
</dbReference>
<dbReference type="GO" id="GO:0098793">
    <property type="term" value="C:presynapse"/>
    <property type="evidence" value="ECO:0007669"/>
    <property type="project" value="GOC"/>
</dbReference>
<dbReference type="GO" id="GO:0000974">
    <property type="term" value="C:Prp19 complex"/>
    <property type="evidence" value="ECO:0000250"/>
    <property type="project" value="UniProtKB"/>
</dbReference>
<dbReference type="GO" id="GO:1990904">
    <property type="term" value="C:ribonucleoprotein complex"/>
    <property type="evidence" value="ECO:0000250"/>
    <property type="project" value="UniProtKB"/>
</dbReference>
<dbReference type="GO" id="GO:0005681">
    <property type="term" value="C:spliceosomal complex"/>
    <property type="evidence" value="ECO:0007669"/>
    <property type="project" value="UniProtKB-KW"/>
</dbReference>
<dbReference type="GO" id="GO:0005524">
    <property type="term" value="F:ATP binding"/>
    <property type="evidence" value="ECO:0007669"/>
    <property type="project" value="UniProtKB-KW"/>
</dbReference>
<dbReference type="GO" id="GO:0016887">
    <property type="term" value="F:ATP hydrolysis activity"/>
    <property type="evidence" value="ECO:0000318"/>
    <property type="project" value="GO_Central"/>
</dbReference>
<dbReference type="GO" id="GO:0140662">
    <property type="term" value="F:ATP-dependent protein folding chaperone"/>
    <property type="evidence" value="ECO:0007669"/>
    <property type="project" value="InterPro"/>
</dbReference>
<dbReference type="GO" id="GO:0031072">
    <property type="term" value="F:heat shock protein binding"/>
    <property type="evidence" value="ECO:0000318"/>
    <property type="project" value="GO_Central"/>
</dbReference>
<dbReference type="GO" id="GO:0044183">
    <property type="term" value="F:protein folding chaperone"/>
    <property type="evidence" value="ECO:0000318"/>
    <property type="project" value="GO_Central"/>
</dbReference>
<dbReference type="GO" id="GO:0030674">
    <property type="term" value="F:protein-macromolecule adaptor activity"/>
    <property type="evidence" value="ECO:0000250"/>
    <property type="project" value="UniProtKB"/>
</dbReference>
<dbReference type="GO" id="GO:0051085">
    <property type="term" value="P:chaperone cofactor-dependent protein refolding"/>
    <property type="evidence" value="ECO:0000318"/>
    <property type="project" value="GO_Central"/>
</dbReference>
<dbReference type="GO" id="GO:0072318">
    <property type="term" value="P:clathrin coat disassembly"/>
    <property type="evidence" value="ECO:0000314"/>
    <property type="project" value="UniProtKB"/>
</dbReference>
<dbReference type="GO" id="GO:0006397">
    <property type="term" value="P:mRNA processing"/>
    <property type="evidence" value="ECO:0007669"/>
    <property type="project" value="UniProtKB-KW"/>
</dbReference>
<dbReference type="GO" id="GO:0045892">
    <property type="term" value="P:negative regulation of DNA-templated transcription"/>
    <property type="evidence" value="ECO:0000250"/>
    <property type="project" value="UniProtKB"/>
</dbReference>
<dbReference type="GO" id="GO:0042026">
    <property type="term" value="P:protein refolding"/>
    <property type="evidence" value="ECO:0000318"/>
    <property type="project" value="GO_Central"/>
</dbReference>
<dbReference type="GO" id="GO:0061740">
    <property type="term" value="P:protein targeting to lysosome involved in chaperone-mediated autophagy"/>
    <property type="evidence" value="ECO:0000250"/>
    <property type="project" value="UniProtKB"/>
</dbReference>
<dbReference type="GO" id="GO:0008380">
    <property type="term" value="P:RNA splicing"/>
    <property type="evidence" value="ECO:0007669"/>
    <property type="project" value="UniProtKB-KW"/>
</dbReference>
<dbReference type="GO" id="GO:0016191">
    <property type="term" value="P:synaptic vesicle uncoating"/>
    <property type="evidence" value="ECO:0000314"/>
    <property type="project" value="SynGO"/>
</dbReference>
<dbReference type="CDD" id="cd10233">
    <property type="entry name" value="ASKHA_NBD_HSP70_HSPA1"/>
    <property type="match status" value="1"/>
</dbReference>
<dbReference type="FunFam" id="2.60.34.10:FF:000002">
    <property type="entry name" value="Heat shock 70 kDa"/>
    <property type="match status" value="1"/>
</dbReference>
<dbReference type="FunFam" id="3.30.420.40:FF:000172">
    <property type="entry name" value="Heat shock 70 kDa protein"/>
    <property type="match status" value="1"/>
</dbReference>
<dbReference type="FunFam" id="3.30.420.40:FF:000028">
    <property type="entry name" value="heat shock 70 kDa protein-like"/>
    <property type="match status" value="1"/>
</dbReference>
<dbReference type="FunFam" id="3.30.420.40:FF:000135">
    <property type="entry name" value="Heat shock cognate 71 kDa protein"/>
    <property type="match status" value="1"/>
</dbReference>
<dbReference type="FunFam" id="3.90.640.10:FF:000134">
    <property type="entry name" value="Heat shock cognate 71 kDa protein"/>
    <property type="match status" value="1"/>
</dbReference>
<dbReference type="FunFam" id="1.20.1270.10:FF:000003">
    <property type="entry name" value="heat shock cognate 71 kDa protein-like"/>
    <property type="match status" value="1"/>
</dbReference>
<dbReference type="FunFam" id="3.30.420.40:FF:000026">
    <property type="entry name" value="Heat shock protein 70"/>
    <property type="match status" value="1"/>
</dbReference>
<dbReference type="FunFam" id="3.30.30.30:FF:000025">
    <property type="entry name" value="Uncharacterized protein"/>
    <property type="match status" value="1"/>
</dbReference>
<dbReference type="Gene3D" id="1.20.1270.10">
    <property type="match status" value="1"/>
</dbReference>
<dbReference type="Gene3D" id="3.30.30.30">
    <property type="match status" value="1"/>
</dbReference>
<dbReference type="Gene3D" id="3.30.420.40">
    <property type="match status" value="2"/>
</dbReference>
<dbReference type="Gene3D" id="3.90.640.10">
    <property type="entry name" value="Actin, Chain A, domain 4"/>
    <property type="match status" value="1"/>
</dbReference>
<dbReference type="Gene3D" id="2.60.34.10">
    <property type="entry name" value="Substrate Binding Domain Of DNAk, Chain A, domain 1"/>
    <property type="match status" value="1"/>
</dbReference>
<dbReference type="InterPro" id="IPR043129">
    <property type="entry name" value="ATPase_NBD"/>
</dbReference>
<dbReference type="InterPro" id="IPR018181">
    <property type="entry name" value="Heat_shock_70_CS"/>
</dbReference>
<dbReference type="InterPro" id="IPR029048">
    <property type="entry name" value="HSP70_C_sf"/>
</dbReference>
<dbReference type="InterPro" id="IPR029047">
    <property type="entry name" value="HSP70_peptide-bd_sf"/>
</dbReference>
<dbReference type="InterPro" id="IPR013126">
    <property type="entry name" value="Hsp_70_fam"/>
</dbReference>
<dbReference type="NCBIfam" id="NF001413">
    <property type="entry name" value="PRK00290.1"/>
    <property type="match status" value="1"/>
</dbReference>
<dbReference type="PANTHER" id="PTHR19375">
    <property type="entry name" value="HEAT SHOCK PROTEIN 70KDA"/>
    <property type="match status" value="1"/>
</dbReference>
<dbReference type="Pfam" id="PF00012">
    <property type="entry name" value="HSP70"/>
    <property type="match status" value="1"/>
</dbReference>
<dbReference type="PRINTS" id="PR00301">
    <property type="entry name" value="HEATSHOCK70"/>
</dbReference>
<dbReference type="SUPFAM" id="SSF53067">
    <property type="entry name" value="Actin-like ATPase domain"/>
    <property type="match status" value="2"/>
</dbReference>
<dbReference type="SUPFAM" id="SSF100934">
    <property type="entry name" value="Heat shock protein 70kD (HSP70), C-terminal subdomain"/>
    <property type="match status" value="1"/>
</dbReference>
<dbReference type="SUPFAM" id="SSF100920">
    <property type="entry name" value="Heat shock protein 70kD (HSP70), peptide-binding domain"/>
    <property type="match status" value="1"/>
</dbReference>
<dbReference type="PROSITE" id="PS00297">
    <property type="entry name" value="HSP70_1"/>
    <property type="match status" value="1"/>
</dbReference>
<dbReference type="PROSITE" id="PS00329">
    <property type="entry name" value="HSP70_2"/>
    <property type="match status" value="1"/>
</dbReference>
<dbReference type="PROSITE" id="PS01036">
    <property type="entry name" value="HSP70_3"/>
    <property type="match status" value="1"/>
</dbReference>
<keyword id="KW-0002">3D-structure</keyword>
<keyword id="KW-0007">Acetylation</keyword>
<keyword id="KW-0067">ATP-binding</keyword>
<keyword id="KW-0072">Autophagy</keyword>
<keyword id="KW-1003">Cell membrane</keyword>
<keyword id="KW-0143">Chaperone</keyword>
<keyword id="KW-0963">Cytoplasm</keyword>
<keyword id="KW-0378">Hydrolase</keyword>
<keyword id="KW-1017">Isopeptide bond</keyword>
<keyword id="KW-0458">Lysosome</keyword>
<keyword id="KW-0472">Membrane</keyword>
<keyword id="KW-0488">Methylation</keyword>
<keyword id="KW-0507">mRNA processing</keyword>
<keyword id="KW-0508">mRNA splicing</keyword>
<keyword id="KW-0547">Nucleotide-binding</keyword>
<keyword id="KW-0539">Nucleus</keyword>
<keyword id="KW-0597">Phosphoprotein</keyword>
<keyword id="KW-1185">Reference proteome</keyword>
<keyword id="KW-0678">Repressor</keyword>
<keyword id="KW-0747">Spliceosome</keyword>
<keyword id="KW-0346">Stress response</keyword>
<keyword id="KW-0804">Transcription</keyword>
<keyword id="KW-0805">Transcription regulation</keyword>
<keyword id="KW-0832">Ubl conjugation</keyword>
<accession>P19120</accession>
<accession>A5D968</accession>
<accession>Q3MHM4</accession>
<sequence>MSKGPAVGIDLGTTYSCVGVFQHGKVEIIANDQGNRTTPSYVAFTDTERLIGDAAKNQVAMNPTNTVFDAKRLIGRRFDDAVVQSDMKHWPFMVVNDAGRPKVQVEYKGETKSFYPEEVSSMVLTKMKEIAEAYLGKTVTNAVVTVPAYFNDSQRQATKDAGTIAGLNVLRIINEPTAAAIAYGLDKKVGAERNVLIFDLGGGTFDVSILTIEDGIFEVKSTAGDTHLGGEDFDNRMVNHFIAEFKRKHKKDISENKRAVRRLRTACERAKRTLSSSTQASIEIDSLYEGIDFYTSITRARFEELNADLFRGTLDPVEKALRDAKLDKSQIHDIVLVGGSTRIPKIQKLLQDFFNGKELNKSINPDEAVAYGAAVQAAILSGDKSENVQDLLLLDVTPLSLGIETAGGVMTVLIKRNTTIPTKQTQTFTTYSDNQPGVLIQVYEGERAMTKDNNLLGKFELTGIPPAPRGVPQIEVTFDIDANGILNVSAVDKSTGKENKITITNDKGRLSKEDIERMVQEAEKYKAEDEKQRDKVSSKNSLESYAFNMKATVEDEKLQGKINDEDKQKILDKCNEIINWLDKNQTAEKEEFEHQQKELEKVCNPIITKLYQSAGGMPGGMPGGMPGGFPGGGAPPSGGASSGPTIEEVD</sequence>
<proteinExistence type="evidence at protein level"/>
<feature type="initiator methionine" description="Removed" evidence="2">
    <location>
        <position position="1"/>
    </location>
</feature>
<feature type="chain" id="PRO_0000078268" description="Heat shock cognate 71 kDa protein">
    <location>
        <begin position="2"/>
        <end position="650"/>
    </location>
</feature>
<feature type="region of interest" description="Nucleotide-binding domain (NBD)" evidence="2">
    <location>
        <begin position="2"/>
        <end position="386"/>
    </location>
</feature>
<feature type="region of interest" description="Interaction with BAG1" evidence="1">
    <location>
        <begin position="186"/>
        <end position="377"/>
    </location>
</feature>
<feature type="region of interest" description="Substrate-binding domain (SBD)" evidence="2">
    <location>
        <begin position="394"/>
        <end position="509"/>
    </location>
</feature>
<feature type="region of interest" description="Disordered" evidence="5">
    <location>
        <begin position="614"/>
        <end position="650"/>
    </location>
</feature>
<feature type="compositionally biased region" description="Gly residues" evidence="5">
    <location>
        <begin position="616"/>
        <end position="636"/>
    </location>
</feature>
<feature type="binding site">
    <location>
        <begin position="12"/>
        <end position="15"/>
    </location>
    <ligand>
        <name>ATP</name>
        <dbReference type="ChEBI" id="CHEBI:30616"/>
    </ligand>
</feature>
<feature type="binding site" evidence="11 12 13 14 15 16">
    <location>
        <position position="14"/>
    </location>
    <ligand>
        <name>ADP</name>
        <dbReference type="ChEBI" id="CHEBI:456216"/>
    </ligand>
</feature>
<feature type="binding site" evidence="11 12 13 14 15 16">
    <location>
        <position position="15"/>
    </location>
    <ligand>
        <name>ADP</name>
        <dbReference type="ChEBI" id="CHEBI:456216"/>
    </ligand>
</feature>
<feature type="binding site">
    <location>
        <position position="71"/>
    </location>
    <ligand>
        <name>ATP</name>
        <dbReference type="ChEBI" id="CHEBI:30616"/>
    </ligand>
</feature>
<feature type="binding site">
    <location>
        <begin position="202"/>
        <end position="204"/>
    </location>
    <ligand>
        <name>ATP</name>
        <dbReference type="ChEBI" id="CHEBI:30616"/>
    </ligand>
</feature>
<feature type="binding site" evidence="11 12 13 14 15 16">
    <location>
        <position position="202"/>
    </location>
    <ligand>
        <name>ADP</name>
        <dbReference type="ChEBI" id="CHEBI:456216"/>
    </ligand>
</feature>
<feature type="binding site">
    <location>
        <begin position="268"/>
        <end position="275"/>
    </location>
    <ligand>
        <name>ATP</name>
        <dbReference type="ChEBI" id="CHEBI:30616"/>
    </ligand>
</feature>
<feature type="binding site" evidence="11 12 13 14 15 16">
    <location>
        <position position="268"/>
    </location>
    <ligand>
        <name>ADP</name>
        <dbReference type="ChEBI" id="CHEBI:456216"/>
    </ligand>
</feature>
<feature type="binding site" evidence="11 12 13 14 15 16">
    <location>
        <position position="271"/>
    </location>
    <ligand>
        <name>ADP</name>
        <dbReference type="ChEBI" id="CHEBI:456216"/>
    </ligand>
</feature>
<feature type="binding site" evidence="11 12 13 14 15 16">
    <location>
        <position position="275"/>
    </location>
    <ligand>
        <name>ADP</name>
        <dbReference type="ChEBI" id="CHEBI:456216"/>
    </ligand>
</feature>
<feature type="binding site">
    <location>
        <begin position="339"/>
        <end position="342"/>
    </location>
    <ligand>
        <name>ATP</name>
        <dbReference type="ChEBI" id="CHEBI:30616"/>
    </ligand>
</feature>
<feature type="binding site" evidence="11 12 13 14 15 16">
    <location>
        <position position="339"/>
    </location>
    <ligand>
        <name>ADP</name>
        <dbReference type="ChEBI" id="CHEBI:456216"/>
    </ligand>
</feature>
<feature type="modified residue" description="N-acetylserine" evidence="2">
    <location>
        <position position="2"/>
    </location>
</feature>
<feature type="modified residue" description="N6-acetyllysine" evidence="3">
    <location>
        <position position="108"/>
    </location>
</feature>
<feature type="modified residue" description="Phosphoserine" evidence="2">
    <location>
        <position position="153"/>
    </location>
</feature>
<feature type="modified residue" description="N6-acetyllysine" evidence="2">
    <location>
        <position position="246"/>
    </location>
</feature>
<feature type="modified residue" description="N6-acetyllysine; alternate" evidence="2">
    <location>
        <position position="319"/>
    </location>
</feature>
<feature type="modified residue" description="N6-succinyllysine; alternate" evidence="3">
    <location>
        <position position="319"/>
    </location>
</feature>
<feature type="modified residue" description="N6-acetyllysine" evidence="3">
    <location>
        <position position="328"/>
    </location>
</feature>
<feature type="modified residue" description="Phosphoserine" evidence="2">
    <location>
        <position position="329"/>
    </location>
</feature>
<feature type="modified residue" description="Phosphoserine" evidence="2">
    <location>
        <position position="362"/>
    </location>
</feature>
<feature type="modified residue" description="Omega-N-methylarginine" evidence="2">
    <location>
        <position position="469"/>
    </location>
</feature>
<feature type="modified residue" description="N6-acetyllysine; alternate" evidence="3">
    <location>
        <position position="512"/>
    </location>
</feature>
<feature type="modified residue" description="N6-succinyllysine; alternate" evidence="3">
    <location>
        <position position="512"/>
    </location>
</feature>
<feature type="modified residue" description="N6-acetyllysine" evidence="3">
    <location>
        <position position="524"/>
    </location>
</feature>
<feature type="modified residue" description="Phosphoserine" evidence="2">
    <location>
        <position position="541"/>
    </location>
</feature>
<feature type="modified residue" description="N6,N6,N6-trimethyllysine; by METTL21A; alternate" evidence="2">
    <location>
        <position position="561"/>
    </location>
</feature>
<feature type="modified residue" description="N6,N6-dimethyllysine; alternate" evidence="2">
    <location>
        <position position="561"/>
    </location>
</feature>
<feature type="modified residue" description="N6-acetyllysine" evidence="2">
    <location>
        <position position="589"/>
    </location>
</feature>
<feature type="modified residue" description="N6-acetyllysine" evidence="2">
    <location>
        <position position="597"/>
    </location>
</feature>
<feature type="modified residue" description="N6-acetyllysine" evidence="2">
    <location>
        <position position="601"/>
    </location>
</feature>
<feature type="cross-link" description="Glycyl lysine isopeptide (Lys-Gly) (interchain with G-Cter in SUMO1); alternate" evidence="2">
    <location>
        <position position="512"/>
    </location>
</feature>
<feature type="cross-link" description="Glycyl lysine isopeptide (Lys-Gly) (interchain with G-Cter in SUMO2); alternate" evidence="2">
    <location>
        <position position="512"/>
    </location>
</feature>
<feature type="sequence conflict" description="In Ref. 3; AAI05183." evidence="9" ref="3">
    <original>A</original>
    <variation>T</variation>
    <location>
        <position position="180"/>
    </location>
</feature>
<feature type="sequence conflict" description="In Ref. 1; CAA37422/CAA37823." evidence="9" ref="1">
    <original>E</original>
    <variation>K</variation>
    <location>
        <position position="543"/>
    </location>
</feature>
<feature type="strand" evidence="22">
    <location>
        <begin position="7"/>
        <end position="11"/>
    </location>
</feature>
<feature type="strand" evidence="22">
    <location>
        <begin position="13"/>
        <end position="22"/>
    </location>
</feature>
<feature type="strand" evidence="22">
    <location>
        <begin position="25"/>
        <end position="28"/>
    </location>
</feature>
<feature type="strand" evidence="22">
    <location>
        <begin position="36"/>
        <end position="39"/>
    </location>
</feature>
<feature type="strand" evidence="22">
    <location>
        <begin position="42"/>
        <end position="44"/>
    </location>
</feature>
<feature type="strand" evidence="22">
    <location>
        <begin position="49"/>
        <end position="51"/>
    </location>
</feature>
<feature type="helix" evidence="22">
    <location>
        <begin position="53"/>
        <end position="57"/>
    </location>
</feature>
<feature type="turn" evidence="22">
    <location>
        <begin position="58"/>
        <end position="61"/>
    </location>
</feature>
<feature type="helix" evidence="22">
    <location>
        <begin position="63"/>
        <end position="65"/>
    </location>
</feature>
<feature type="strand" evidence="21">
    <location>
        <begin position="66"/>
        <end position="68"/>
    </location>
</feature>
<feature type="helix" evidence="22">
    <location>
        <begin position="70"/>
        <end position="72"/>
    </location>
</feature>
<feature type="turn" evidence="22">
    <location>
        <begin position="73"/>
        <end position="75"/>
    </location>
</feature>
<feature type="helix" evidence="22">
    <location>
        <begin position="81"/>
        <end position="87"/>
    </location>
</feature>
<feature type="strand" evidence="22">
    <location>
        <begin position="91"/>
        <end position="97"/>
    </location>
</feature>
<feature type="strand" evidence="22">
    <location>
        <begin position="100"/>
        <end position="107"/>
    </location>
</feature>
<feature type="strand" evidence="22">
    <location>
        <begin position="110"/>
        <end position="114"/>
    </location>
</feature>
<feature type="helix" evidence="22">
    <location>
        <begin position="116"/>
        <end position="135"/>
    </location>
</feature>
<feature type="strand" evidence="22">
    <location>
        <begin position="141"/>
        <end position="146"/>
    </location>
</feature>
<feature type="helix" evidence="22">
    <location>
        <begin position="152"/>
        <end position="164"/>
    </location>
</feature>
<feature type="strand" evidence="22">
    <location>
        <begin position="168"/>
        <end position="174"/>
    </location>
</feature>
<feature type="helix" evidence="22">
    <location>
        <begin position="175"/>
        <end position="182"/>
    </location>
</feature>
<feature type="helix" evidence="22">
    <location>
        <begin position="185"/>
        <end position="187"/>
    </location>
</feature>
<feature type="strand" evidence="18">
    <location>
        <begin position="189"/>
        <end position="191"/>
    </location>
</feature>
<feature type="strand" evidence="22">
    <location>
        <begin position="193"/>
        <end position="201"/>
    </location>
</feature>
<feature type="strand" evidence="22">
    <location>
        <begin position="204"/>
        <end position="213"/>
    </location>
</feature>
<feature type="strand" evidence="22">
    <location>
        <begin position="216"/>
        <end position="225"/>
    </location>
</feature>
<feature type="helix" evidence="22">
    <location>
        <begin position="230"/>
        <end position="249"/>
    </location>
</feature>
<feature type="helix" evidence="22">
    <location>
        <begin position="253"/>
        <end position="255"/>
    </location>
</feature>
<feature type="helix" evidence="22">
    <location>
        <begin position="257"/>
        <end position="276"/>
    </location>
</feature>
<feature type="strand" evidence="22">
    <location>
        <begin position="277"/>
        <end position="288"/>
    </location>
</feature>
<feature type="strand" evidence="22">
    <location>
        <begin position="291"/>
        <end position="298"/>
    </location>
</feature>
<feature type="helix" evidence="22">
    <location>
        <begin position="299"/>
        <end position="305"/>
    </location>
</feature>
<feature type="helix" evidence="22">
    <location>
        <begin position="307"/>
        <end position="312"/>
    </location>
</feature>
<feature type="helix" evidence="22">
    <location>
        <begin position="314"/>
        <end position="323"/>
    </location>
</feature>
<feature type="helix" evidence="22">
    <location>
        <begin position="328"/>
        <end position="330"/>
    </location>
</feature>
<feature type="strand" evidence="22">
    <location>
        <begin position="333"/>
        <end position="338"/>
    </location>
</feature>
<feature type="helix" evidence="22">
    <location>
        <begin position="339"/>
        <end position="342"/>
    </location>
</feature>
<feature type="helix" evidence="22">
    <location>
        <begin position="344"/>
        <end position="353"/>
    </location>
</feature>
<feature type="turn" evidence="22">
    <location>
        <begin position="354"/>
        <end position="356"/>
    </location>
</feature>
<feature type="turn" evidence="22">
    <location>
        <begin position="365"/>
        <end position="367"/>
    </location>
</feature>
<feature type="helix" evidence="22">
    <location>
        <begin position="368"/>
        <end position="380"/>
    </location>
</feature>
<feature type="strand" evidence="19">
    <location>
        <begin position="386"/>
        <end position="388"/>
    </location>
</feature>
<feature type="strand" evidence="20">
    <location>
        <begin position="392"/>
        <end position="396"/>
    </location>
</feature>
<feature type="strand" evidence="22">
    <location>
        <begin position="401"/>
        <end position="405"/>
    </location>
</feature>
<feature type="turn" evidence="22">
    <location>
        <begin position="406"/>
        <end position="408"/>
    </location>
</feature>
<feature type="strand" evidence="22">
    <location>
        <begin position="409"/>
        <end position="414"/>
    </location>
</feature>
<feature type="strand" evidence="22">
    <location>
        <begin position="419"/>
        <end position="432"/>
    </location>
</feature>
<feature type="strand" evidence="22">
    <location>
        <begin position="438"/>
        <end position="449"/>
    </location>
</feature>
<feature type="helix" evidence="22">
    <location>
        <begin position="450"/>
        <end position="452"/>
    </location>
</feature>
<feature type="strand" evidence="22">
    <location>
        <begin position="453"/>
        <end position="461"/>
    </location>
</feature>
<feature type="strand" evidence="22">
    <location>
        <begin position="474"/>
        <end position="480"/>
    </location>
</feature>
<feature type="turn" evidence="23">
    <location>
        <begin position="482"/>
        <end position="484"/>
    </location>
</feature>
<feature type="strand" evidence="22">
    <location>
        <begin position="486"/>
        <end position="492"/>
    </location>
</feature>
<feature type="turn" evidence="22">
    <location>
        <begin position="493"/>
        <end position="495"/>
    </location>
</feature>
<feature type="strand" evidence="22">
    <location>
        <begin position="498"/>
        <end position="503"/>
    </location>
</feature>
<feature type="helix" evidence="22">
    <location>
        <begin position="512"/>
        <end position="524"/>
    </location>
</feature>
<feature type="helix" evidence="22">
    <location>
        <begin position="526"/>
        <end position="532"/>
    </location>
</feature>
<feature type="helix" evidence="22">
    <location>
        <begin position="533"/>
        <end position="535"/>
    </location>
</feature>
<feature type="strand" evidence="22">
    <location>
        <begin position="539"/>
        <end position="542"/>
    </location>
</feature>
<feature type="helix" evidence="22">
    <location>
        <begin position="547"/>
        <end position="549"/>
    </location>
</feature>
<reference key="1">
    <citation type="journal article" date="1990" name="Nucleic Acids Res.">
        <title>Nucleotide sequence of the cDNA of a bovine 70 kilodalton heat shock cognate protein.</title>
        <authorList>
            <person name="Deluca-Flaherty C."/>
            <person name="McKay D.B."/>
        </authorList>
    </citation>
    <scope>NUCLEOTIDE SEQUENCE [MRNA]</scope>
    <source>
        <tissue>Brain cortex</tissue>
    </source>
</reference>
<reference key="2">
    <citation type="journal article" date="2005" name="BMC Genomics">
        <title>Characterization of 954 bovine full-CDS cDNA sequences.</title>
        <authorList>
            <person name="Harhay G.P."/>
            <person name="Sonstegard T.S."/>
            <person name="Keele J.W."/>
            <person name="Heaton M.P."/>
            <person name="Clawson M.L."/>
            <person name="Snelling W.M."/>
            <person name="Wiedmann R.T."/>
            <person name="Van Tassell C.P."/>
            <person name="Smith T.P.L."/>
        </authorList>
    </citation>
    <scope>NUCLEOTIDE SEQUENCE [LARGE SCALE MRNA]</scope>
</reference>
<reference key="3">
    <citation type="submission" date="2005-09" db="EMBL/GenBank/DDBJ databases">
        <authorList>
            <consortium name="NIH - Mammalian Gene Collection (MGC) project"/>
        </authorList>
    </citation>
    <scope>NUCLEOTIDE SEQUENCE [LARGE SCALE MRNA]</scope>
    <source>
        <strain>Crossbred X Angus</strain>
        <tissue>Ileum</tissue>
    </source>
</reference>
<reference key="4">
    <citation type="journal article" date="1995" name="Nature">
        <title>Role of auxilin in uncoating clathrin-coated vesicles.</title>
        <authorList>
            <person name="Ungewickell E."/>
            <person name="Ungewickell H."/>
            <person name="Holstein S.E."/>
            <person name="Lindner R."/>
            <person name="Prasad K."/>
            <person name="Barouch W."/>
            <person name="Martin B."/>
            <person name="Greene L.E."/>
            <person name="Eisenberg E."/>
        </authorList>
    </citation>
    <scope>FUNCTION</scope>
    <scope>INTERACTION WITH DNAJC6</scope>
</reference>
<reference key="5">
    <citation type="journal article" date="1990" name="Nature">
        <title>Three-dimensional structure of the ATPase fragment of a 70K heat-shock cognate protein.</title>
        <authorList>
            <person name="Flaherty K.M."/>
            <person name="de Luca-Flaherty C."/>
            <person name="McKay D.B."/>
        </authorList>
    </citation>
    <scope>X-RAY CRYSTALLOGRAPHY (2.2 ANGSTROMS) OF 1-385 IN COMPLEX WITH ADP</scope>
</reference>
<reference key="6">
    <citation type="journal article" date="1994" name="J. Biol. Chem.">
        <title>Structural basis of the 70-kilodalton heat shock cognate protein ATP hydrolytic activity. II. Structure of the active site with ADP or ATP bound to wild type and mutant ATPase fragment.</title>
        <authorList>
            <person name="Flaherty K.M."/>
            <person name="Wilbanks S.M."/>
            <person name="Deluca-Flaherty C."/>
            <person name="McKay D.B."/>
        </authorList>
    </citation>
    <scope>X-RAY CRYSTALLOGRAPHY (2.4 ANGSTROMS) OF 1-385 IN COMPLEXES WITH ADP AND ATP</scope>
</reference>
<reference key="7">
    <citation type="journal article" date="1998" name="Biochemistry">
        <title>Structural replacement of active site monovalent cations by the epsilon-amino group of lysine in the ATPase fragment of bovine Hsc70.</title>
        <authorList>
            <person name="Wilbanks S.M."/>
            <person name="McKay D.B."/>
        </authorList>
    </citation>
    <scope>X-RAY CRYSTALLOGRAPHY (1.9 ANGSTROMS) OF 1-385 IN COMPLEX WITH ADP</scope>
</reference>
<reference key="8">
    <citation type="journal article" date="1998" name="Biochemistry">
        <title>The hydroxyl of threonine 13 of the bovine 70-kDa heat shock cognate protein is essential for transducing the ATP-induced conformational change.</title>
        <authorList>
            <person name="Sousa M.C."/>
            <person name="McKay D.B."/>
        </authorList>
    </citation>
    <scope>X-RAY CRYSTALLOGRAPHY (1.7 ANGSTROMS) OF 1-381 IN COMPLEX WITH ADP</scope>
</reference>
<reference key="9">
    <citation type="journal article" date="1999" name="Biochemistry">
        <title>Mapping the role of active site residues for transducing an ATP-induced conformational change in the bovine 70-kDa heat shock cognate protein.</title>
        <authorList>
            <person name="Johnson E.R."/>
            <person name="McKay D.B."/>
        </authorList>
    </citation>
    <scope>X-RAY CRYSTALLOGRAPHY (1.9 ANGSTROMS) OF 1-381 OF MUTANTS</scope>
</reference>
<reference evidence="10 11 12 13 14 15 16 17" key="10">
    <citation type="journal article" date="2007" name="Mol. Cell">
        <title>Structural basis of J cochaperone binding and regulation of Hsp70.</title>
        <authorList>
            <person name="Jiang J."/>
            <person name="Maes E.G."/>
            <person name="Taylor A.B."/>
            <person name="Wang L."/>
            <person name="Hinck A.P."/>
            <person name="Lafer E.M."/>
            <person name="Sousa R."/>
        </authorList>
    </citation>
    <scope>X-RAY CRYSTALLOGRAPHY (1.70 ANGSTROMS) OF 1-394 IN COMPLEX WITH ADP AND DNAJC6</scope>
    <scope>FUNCTION</scope>
</reference>
<reference key="11">
    <citation type="journal article" date="2008" name="Mol. Cell">
        <title>Structure of the Hsp110:Hsc70 nucleotide exchange machine.</title>
        <authorList>
            <person name="Schuermann J.P."/>
            <person name="Jiang J."/>
            <person name="Cuellar J."/>
            <person name="Llorca O."/>
            <person name="Wang L."/>
            <person name="Gimenez L.E."/>
            <person name="Jin S."/>
            <person name="Taylor A.B."/>
            <person name="Demeler B."/>
            <person name="Morano K.A."/>
            <person name="Hart P.J."/>
            <person name="Valpuesta J.M."/>
            <person name="Lafer E.M."/>
            <person name="Sousa R."/>
        </authorList>
    </citation>
    <scope>X-RAY CRYSTALLOGRAPHY (3.12 ANGSTROMS) OF 2-554 IN COMPLEX WITH ADP</scope>
</reference>
<name>HSP7C_BOVIN</name>